<protein>
    <recommendedName>
        <fullName evidence="1">Transcriptional repressor NrdR</fullName>
    </recommendedName>
</protein>
<keyword id="KW-0067">ATP-binding</keyword>
<keyword id="KW-0238">DNA-binding</keyword>
<keyword id="KW-0479">Metal-binding</keyword>
<keyword id="KW-0547">Nucleotide-binding</keyword>
<keyword id="KW-0678">Repressor</keyword>
<keyword id="KW-0804">Transcription</keyword>
<keyword id="KW-0805">Transcription regulation</keyword>
<keyword id="KW-0862">Zinc</keyword>
<keyword id="KW-0863">Zinc-finger</keyword>
<dbReference type="EMBL" id="CP001176">
    <property type="protein sequence ID" value="ACK59713.1"/>
    <property type="molecule type" value="Genomic_DNA"/>
</dbReference>
<dbReference type="RefSeq" id="WP_001203687.1">
    <property type="nucleotide sequence ID" value="NZ_VEHB01000005.1"/>
</dbReference>
<dbReference type="SMR" id="B7HF94"/>
<dbReference type="GeneID" id="93006530"/>
<dbReference type="KEGG" id="bcb:BCB4264_A4690"/>
<dbReference type="HOGENOM" id="CLU_108412_0_0_9"/>
<dbReference type="Proteomes" id="UP000007096">
    <property type="component" value="Chromosome"/>
</dbReference>
<dbReference type="GO" id="GO:0005524">
    <property type="term" value="F:ATP binding"/>
    <property type="evidence" value="ECO:0007669"/>
    <property type="project" value="UniProtKB-KW"/>
</dbReference>
<dbReference type="GO" id="GO:0003677">
    <property type="term" value="F:DNA binding"/>
    <property type="evidence" value="ECO:0007669"/>
    <property type="project" value="UniProtKB-KW"/>
</dbReference>
<dbReference type="GO" id="GO:0008270">
    <property type="term" value="F:zinc ion binding"/>
    <property type="evidence" value="ECO:0007669"/>
    <property type="project" value="UniProtKB-UniRule"/>
</dbReference>
<dbReference type="GO" id="GO:0045892">
    <property type="term" value="P:negative regulation of DNA-templated transcription"/>
    <property type="evidence" value="ECO:0007669"/>
    <property type="project" value="UniProtKB-UniRule"/>
</dbReference>
<dbReference type="HAMAP" id="MF_00440">
    <property type="entry name" value="NrdR"/>
    <property type="match status" value="1"/>
</dbReference>
<dbReference type="InterPro" id="IPR005144">
    <property type="entry name" value="ATP-cone_dom"/>
</dbReference>
<dbReference type="InterPro" id="IPR055173">
    <property type="entry name" value="NrdR-like_N"/>
</dbReference>
<dbReference type="InterPro" id="IPR003796">
    <property type="entry name" value="RNR_NrdR-like"/>
</dbReference>
<dbReference type="NCBIfam" id="TIGR00244">
    <property type="entry name" value="transcriptional regulator NrdR"/>
    <property type="match status" value="1"/>
</dbReference>
<dbReference type="PANTHER" id="PTHR30455">
    <property type="entry name" value="TRANSCRIPTIONAL REPRESSOR NRDR"/>
    <property type="match status" value="1"/>
</dbReference>
<dbReference type="PANTHER" id="PTHR30455:SF2">
    <property type="entry name" value="TRANSCRIPTIONAL REPRESSOR NRDR"/>
    <property type="match status" value="1"/>
</dbReference>
<dbReference type="Pfam" id="PF03477">
    <property type="entry name" value="ATP-cone"/>
    <property type="match status" value="1"/>
</dbReference>
<dbReference type="Pfam" id="PF22811">
    <property type="entry name" value="Zn_ribbon_NrdR"/>
    <property type="match status" value="1"/>
</dbReference>
<dbReference type="PROSITE" id="PS51161">
    <property type="entry name" value="ATP_CONE"/>
    <property type="match status" value="1"/>
</dbReference>
<accession>B7HF94</accession>
<proteinExistence type="inferred from homology"/>
<reference key="1">
    <citation type="submission" date="2008-10" db="EMBL/GenBank/DDBJ databases">
        <title>Genome sequence of Bacillus cereus B4264.</title>
        <authorList>
            <person name="Dodson R.J."/>
            <person name="Durkin A.S."/>
            <person name="Rosovitz M.J."/>
            <person name="Rasko D.A."/>
            <person name="Hoffmaster A."/>
            <person name="Ravel J."/>
            <person name="Sutton G."/>
        </authorList>
    </citation>
    <scope>NUCLEOTIDE SEQUENCE [LARGE SCALE GENOMIC DNA]</scope>
    <source>
        <strain>B4264</strain>
    </source>
</reference>
<comment type="function">
    <text evidence="1">Negatively regulates transcription of bacterial ribonucleotide reductase nrd genes and operons by binding to NrdR-boxes.</text>
</comment>
<comment type="cofactor">
    <cofactor evidence="1">
        <name>Zn(2+)</name>
        <dbReference type="ChEBI" id="CHEBI:29105"/>
    </cofactor>
    <text evidence="1">Binds 1 zinc ion.</text>
</comment>
<comment type="similarity">
    <text evidence="1">Belongs to the NrdR family.</text>
</comment>
<gene>
    <name evidence="1" type="primary">nrdR</name>
    <name type="ordered locus">BCB4264_A4690</name>
</gene>
<evidence type="ECO:0000255" key="1">
    <source>
        <dbReference type="HAMAP-Rule" id="MF_00440"/>
    </source>
</evidence>
<feature type="chain" id="PRO_1000124468" description="Transcriptional repressor NrdR">
    <location>
        <begin position="1"/>
        <end position="153"/>
    </location>
</feature>
<feature type="domain" description="ATP-cone" evidence="1">
    <location>
        <begin position="49"/>
        <end position="139"/>
    </location>
</feature>
<feature type="zinc finger region" evidence="1">
    <location>
        <begin position="3"/>
        <end position="34"/>
    </location>
</feature>
<name>NRDR_BACC4</name>
<organism>
    <name type="scientific">Bacillus cereus (strain B4264)</name>
    <dbReference type="NCBI Taxonomy" id="405532"/>
    <lineage>
        <taxon>Bacteria</taxon>
        <taxon>Bacillati</taxon>
        <taxon>Bacillota</taxon>
        <taxon>Bacilli</taxon>
        <taxon>Bacillales</taxon>
        <taxon>Bacillaceae</taxon>
        <taxon>Bacillus</taxon>
        <taxon>Bacillus cereus group</taxon>
    </lineage>
</organism>
<sequence>MRCPSCSHNGTRVLDSRPVDEGRSIRRRRECESCLSRFTTFERVEESPLIVVKKEGTREEFNKEKILRGLIKACEKRPVSLRQLEEVTQSVERELRNLGISEVKSDMIGEIVMEELRDIDDVAYVRFASVYRQFKDLNVFIEELKDILQKERE</sequence>